<feature type="chain" id="PRO_1000063920" description="Methylenetetrahydrofolate--tRNA-(uracil-5-)-methyltransferase TrmFO">
    <location>
        <begin position="1"/>
        <end position="434"/>
    </location>
</feature>
<feature type="binding site" evidence="1">
    <location>
        <begin position="9"/>
        <end position="14"/>
    </location>
    <ligand>
        <name>FAD</name>
        <dbReference type="ChEBI" id="CHEBI:57692"/>
    </ligand>
</feature>
<keyword id="KW-0963">Cytoplasm</keyword>
<keyword id="KW-0274">FAD</keyword>
<keyword id="KW-0285">Flavoprotein</keyword>
<keyword id="KW-0489">Methyltransferase</keyword>
<keyword id="KW-0520">NAD</keyword>
<keyword id="KW-0521">NADP</keyword>
<keyword id="KW-0808">Transferase</keyword>
<keyword id="KW-0819">tRNA processing</keyword>
<evidence type="ECO:0000255" key="1">
    <source>
        <dbReference type="HAMAP-Rule" id="MF_01037"/>
    </source>
</evidence>
<protein>
    <recommendedName>
        <fullName evidence="1">Methylenetetrahydrofolate--tRNA-(uracil-5-)-methyltransferase TrmFO</fullName>
        <ecNumber evidence="1">2.1.1.74</ecNumber>
    </recommendedName>
    <alternativeName>
        <fullName evidence="1">Folate-dependent tRNA (uracil-5-)-methyltransferase</fullName>
    </alternativeName>
    <alternativeName>
        <fullName evidence="1">Folate-dependent tRNA(M-5-U54)-methyltransferase</fullName>
    </alternativeName>
</protein>
<comment type="function">
    <text evidence="1">Catalyzes the folate-dependent formation of 5-methyl-uridine at position 54 (M-5-U54) in all tRNAs.</text>
</comment>
<comment type="catalytic activity">
    <reaction evidence="1">
        <text>uridine(54) in tRNA + (6R)-5,10-methylene-5,6,7,8-tetrahydrofolate + NADH + H(+) = 5-methyluridine(54) in tRNA + (6S)-5,6,7,8-tetrahydrofolate + NAD(+)</text>
        <dbReference type="Rhea" id="RHEA:16873"/>
        <dbReference type="Rhea" id="RHEA-COMP:10167"/>
        <dbReference type="Rhea" id="RHEA-COMP:10193"/>
        <dbReference type="ChEBI" id="CHEBI:15378"/>
        <dbReference type="ChEBI" id="CHEBI:15636"/>
        <dbReference type="ChEBI" id="CHEBI:57453"/>
        <dbReference type="ChEBI" id="CHEBI:57540"/>
        <dbReference type="ChEBI" id="CHEBI:57945"/>
        <dbReference type="ChEBI" id="CHEBI:65315"/>
        <dbReference type="ChEBI" id="CHEBI:74447"/>
        <dbReference type="EC" id="2.1.1.74"/>
    </reaction>
</comment>
<comment type="catalytic activity">
    <reaction evidence="1">
        <text>uridine(54) in tRNA + (6R)-5,10-methylene-5,6,7,8-tetrahydrofolate + NADPH + H(+) = 5-methyluridine(54) in tRNA + (6S)-5,6,7,8-tetrahydrofolate + NADP(+)</text>
        <dbReference type="Rhea" id="RHEA:62372"/>
        <dbReference type="Rhea" id="RHEA-COMP:10167"/>
        <dbReference type="Rhea" id="RHEA-COMP:10193"/>
        <dbReference type="ChEBI" id="CHEBI:15378"/>
        <dbReference type="ChEBI" id="CHEBI:15636"/>
        <dbReference type="ChEBI" id="CHEBI:57453"/>
        <dbReference type="ChEBI" id="CHEBI:57783"/>
        <dbReference type="ChEBI" id="CHEBI:58349"/>
        <dbReference type="ChEBI" id="CHEBI:65315"/>
        <dbReference type="ChEBI" id="CHEBI:74447"/>
        <dbReference type="EC" id="2.1.1.74"/>
    </reaction>
</comment>
<comment type="cofactor">
    <cofactor evidence="1">
        <name>FAD</name>
        <dbReference type="ChEBI" id="CHEBI:57692"/>
    </cofactor>
</comment>
<comment type="subcellular location">
    <subcellularLocation>
        <location evidence="1">Cytoplasm</location>
    </subcellularLocation>
</comment>
<comment type="similarity">
    <text evidence="1">Belongs to the MnmG family. TrmFO subfamily.</text>
</comment>
<reference key="1">
    <citation type="journal article" date="2006" name="J. Bacteriol.">
        <title>Whole-genome sequence of Listeria welshimeri reveals common steps in genome reduction with Listeria innocua as compared to Listeria monocytogenes.</title>
        <authorList>
            <person name="Hain T."/>
            <person name="Steinweg C."/>
            <person name="Kuenne C.T."/>
            <person name="Billion A."/>
            <person name="Ghai R."/>
            <person name="Chatterjee S.S."/>
            <person name="Domann E."/>
            <person name="Kaerst U."/>
            <person name="Goesmann A."/>
            <person name="Bekel T."/>
            <person name="Bartels D."/>
            <person name="Kaiser O."/>
            <person name="Meyer F."/>
            <person name="Puehler A."/>
            <person name="Weisshaar B."/>
            <person name="Wehland J."/>
            <person name="Liang C."/>
            <person name="Dandekar T."/>
            <person name="Lampidis R."/>
            <person name="Kreft J."/>
            <person name="Goebel W."/>
            <person name="Chakraborty T."/>
        </authorList>
    </citation>
    <scope>NUCLEOTIDE SEQUENCE [LARGE SCALE GENOMIC DNA]</scope>
    <source>
        <strain>ATCC 35897 / DSM 20650 / CCUG 15529 / CIP 8149 / NCTC 11857 / SLCC 5334 / V8</strain>
    </source>
</reference>
<organism>
    <name type="scientific">Listeria welshimeri serovar 6b (strain ATCC 35897 / DSM 20650 / CCUG 15529 / CIP 8149 / NCTC 11857 / SLCC 5334 / V8)</name>
    <dbReference type="NCBI Taxonomy" id="386043"/>
    <lineage>
        <taxon>Bacteria</taxon>
        <taxon>Bacillati</taxon>
        <taxon>Bacillota</taxon>
        <taxon>Bacilli</taxon>
        <taxon>Bacillales</taxon>
        <taxon>Listeriaceae</taxon>
        <taxon>Listeria</taxon>
    </lineage>
</organism>
<sequence>MEKSVNVIGAGLAGSEATWQLVKRGIKVDLYEMRPVKQTPAHHTDKFAELVCTNSLRANGLTNAVGVIKEEMRILDSIIIESADKASVPAGGALAVDRHEFSGYITEKVKNHPLVTVHTEEVTSIPDGPTIIATGPLTSPALAEEIKQLTGEDYLYFYDAAAPIIEKDSIDMDKVYLKSRYDKGEAAYLNCPMSEEEFKTFYEALVTAETAALKEFEKEVFFEGCMPIEVMAKRGIKTMLFGPLKPVGLEDPKTGKRPYAVLQLRQDDAAGTLYNMVGFQTHLKWGEQKRVFGLIPGLENAEIVRYGVMHRNTFINSPTVLEPTYQLKTRDDLFFAGQMTGVEGYVESAASGLAAGINAANFVQEKETIVFPAESAIGSLAHYITSASKKSFQPMNVNFGLFPELPSKIRAKQERNEKLAERALDAIKKVAEQV</sequence>
<dbReference type="EC" id="2.1.1.74" evidence="1"/>
<dbReference type="EMBL" id="AM263198">
    <property type="protein sequence ID" value="CAK20711.1"/>
    <property type="molecule type" value="Genomic_DNA"/>
</dbReference>
<dbReference type="RefSeq" id="WP_011702102.1">
    <property type="nucleotide sequence ID" value="NC_008555.1"/>
</dbReference>
<dbReference type="SMR" id="A0AI79"/>
<dbReference type="STRING" id="386043.lwe1293"/>
<dbReference type="GeneID" id="61189170"/>
<dbReference type="KEGG" id="lwe:lwe1293"/>
<dbReference type="eggNOG" id="COG1206">
    <property type="taxonomic scope" value="Bacteria"/>
</dbReference>
<dbReference type="HOGENOM" id="CLU_033057_1_0_9"/>
<dbReference type="OrthoDB" id="9803114at2"/>
<dbReference type="Proteomes" id="UP000000779">
    <property type="component" value="Chromosome"/>
</dbReference>
<dbReference type="GO" id="GO:0005829">
    <property type="term" value="C:cytosol"/>
    <property type="evidence" value="ECO:0007669"/>
    <property type="project" value="TreeGrafter"/>
</dbReference>
<dbReference type="GO" id="GO:0050660">
    <property type="term" value="F:flavin adenine dinucleotide binding"/>
    <property type="evidence" value="ECO:0007669"/>
    <property type="project" value="UniProtKB-UniRule"/>
</dbReference>
<dbReference type="GO" id="GO:0047151">
    <property type="term" value="F:tRNA (uracil(54)-C5)-methyltransferase activity, 5,10-methylenetetrahydrofolate-dependent"/>
    <property type="evidence" value="ECO:0007669"/>
    <property type="project" value="UniProtKB-UniRule"/>
</dbReference>
<dbReference type="GO" id="GO:0030488">
    <property type="term" value="P:tRNA methylation"/>
    <property type="evidence" value="ECO:0007669"/>
    <property type="project" value="TreeGrafter"/>
</dbReference>
<dbReference type="GO" id="GO:0002098">
    <property type="term" value="P:tRNA wobble uridine modification"/>
    <property type="evidence" value="ECO:0007669"/>
    <property type="project" value="TreeGrafter"/>
</dbReference>
<dbReference type="FunFam" id="3.50.50.60:FF:000035">
    <property type="entry name" value="Methylenetetrahydrofolate--tRNA-(uracil-5-)-methyltransferase TrmFO"/>
    <property type="match status" value="1"/>
</dbReference>
<dbReference type="FunFam" id="3.50.50.60:FF:000040">
    <property type="entry name" value="Methylenetetrahydrofolate--tRNA-(uracil-5-)-methyltransferase TrmFO"/>
    <property type="match status" value="1"/>
</dbReference>
<dbReference type="Gene3D" id="3.50.50.60">
    <property type="entry name" value="FAD/NAD(P)-binding domain"/>
    <property type="match status" value="2"/>
</dbReference>
<dbReference type="HAMAP" id="MF_01037">
    <property type="entry name" value="TrmFO"/>
    <property type="match status" value="1"/>
</dbReference>
<dbReference type="InterPro" id="IPR036188">
    <property type="entry name" value="FAD/NAD-bd_sf"/>
</dbReference>
<dbReference type="InterPro" id="IPR002218">
    <property type="entry name" value="MnmG-rel"/>
</dbReference>
<dbReference type="InterPro" id="IPR020595">
    <property type="entry name" value="MnmG-rel_CS"/>
</dbReference>
<dbReference type="InterPro" id="IPR040131">
    <property type="entry name" value="MnmG_N"/>
</dbReference>
<dbReference type="InterPro" id="IPR004417">
    <property type="entry name" value="TrmFO"/>
</dbReference>
<dbReference type="NCBIfam" id="TIGR00137">
    <property type="entry name" value="gid_trmFO"/>
    <property type="match status" value="1"/>
</dbReference>
<dbReference type="NCBIfam" id="NF003739">
    <property type="entry name" value="PRK05335.1"/>
    <property type="match status" value="1"/>
</dbReference>
<dbReference type="PANTHER" id="PTHR11806">
    <property type="entry name" value="GLUCOSE INHIBITED DIVISION PROTEIN A"/>
    <property type="match status" value="1"/>
</dbReference>
<dbReference type="PANTHER" id="PTHR11806:SF2">
    <property type="entry name" value="METHYLENETETRAHYDROFOLATE--TRNA-(URACIL-5-)-METHYLTRANSFERASE TRMFO"/>
    <property type="match status" value="1"/>
</dbReference>
<dbReference type="Pfam" id="PF01134">
    <property type="entry name" value="GIDA"/>
    <property type="match status" value="1"/>
</dbReference>
<dbReference type="SUPFAM" id="SSF51905">
    <property type="entry name" value="FAD/NAD(P)-binding domain"/>
    <property type="match status" value="1"/>
</dbReference>
<dbReference type="PROSITE" id="PS01281">
    <property type="entry name" value="GIDA_2"/>
    <property type="match status" value="1"/>
</dbReference>
<accession>A0AI79</accession>
<name>TRMFO_LISW6</name>
<gene>
    <name evidence="1" type="primary">trmFO</name>
    <name type="synonym">gid</name>
    <name type="ordered locus">lwe1293</name>
</gene>
<proteinExistence type="inferred from homology"/>